<feature type="chain" id="PRO_0000305345" description="CPX chromosomal region candidate gene 1 protein homolog">
    <location>
        <begin position="1"/>
        <end position="322"/>
    </location>
</feature>
<feature type="region of interest" description="Disordered" evidence="1">
    <location>
        <begin position="1"/>
        <end position="83"/>
    </location>
</feature>
<feature type="compositionally biased region" description="Polar residues" evidence="1">
    <location>
        <begin position="1"/>
        <end position="23"/>
    </location>
</feature>
<feature type="compositionally biased region" description="Polar residues" evidence="1">
    <location>
        <begin position="37"/>
        <end position="78"/>
    </location>
</feature>
<feature type="sequence conflict" description="In Ref. 1; BAE21463." evidence="2" ref="1">
    <original>C</original>
    <variation>G</variation>
    <location>
        <position position="145"/>
    </location>
</feature>
<accession>Q3V0P1</accession>
<accession>A2BEE6</accession>
<accession>B2RW29</accession>
<name>CPXCR_MOUSE</name>
<protein>
    <recommendedName>
        <fullName>CPX chromosomal region candidate gene 1 protein homolog</fullName>
    </recommendedName>
</protein>
<keyword id="KW-1185">Reference proteome</keyword>
<organism>
    <name type="scientific">Mus musculus</name>
    <name type="common">Mouse</name>
    <dbReference type="NCBI Taxonomy" id="10090"/>
    <lineage>
        <taxon>Eukaryota</taxon>
        <taxon>Metazoa</taxon>
        <taxon>Chordata</taxon>
        <taxon>Craniata</taxon>
        <taxon>Vertebrata</taxon>
        <taxon>Euteleostomi</taxon>
        <taxon>Mammalia</taxon>
        <taxon>Eutheria</taxon>
        <taxon>Euarchontoglires</taxon>
        <taxon>Glires</taxon>
        <taxon>Rodentia</taxon>
        <taxon>Myomorpha</taxon>
        <taxon>Muroidea</taxon>
        <taxon>Muridae</taxon>
        <taxon>Murinae</taxon>
        <taxon>Mus</taxon>
        <taxon>Mus</taxon>
    </lineage>
</organism>
<proteinExistence type="evidence at transcript level"/>
<gene>
    <name type="primary">Cpxcr1</name>
    <name type="synonym">Gm1143</name>
</gene>
<evidence type="ECO:0000256" key="1">
    <source>
        <dbReference type="SAM" id="MobiDB-lite"/>
    </source>
</evidence>
<evidence type="ECO:0000305" key="2"/>
<sequence length="322" mass="37706">MTSSNQGNDPSENTLKNAENETPNACEDEKEHPLPDTNISQVETNLSGMEPSSISSQEDMDFQTVQNSQPEAEMTQNDPPDEELIEDSLPLQIPIPKKLTIPRLILCRIIYLSIPQPQPQLHEKKTLSDKMMFHLGEVEMTENDCFHTPILDKMIHPCFLRWRVPFFTTNEISRMIIHLLCSRNFSQAECHQHNASVKQKYVAILDHQNIMNLQRNIVFGRPLRVYYYHPLFERLTQRKASKLYQHKNGNHLFVRPRFYMPQLQTQNTVQKNVFKHSWRAHHKLRLVIITDNNNWKYLCPICGCGFNNFYDFKHHSCSFSGN</sequence>
<reference key="1">
    <citation type="journal article" date="2005" name="Science">
        <title>The transcriptional landscape of the mammalian genome.</title>
        <authorList>
            <person name="Carninci P."/>
            <person name="Kasukawa T."/>
            <person name="Katayama S."/>
            <person name="Gough J."/>
            <person name="Frith M.C."/>
            <person name="Maeda N."/>
            <person name="Oyama R."/>
            <person name="Ravasi T."/>
            <person name="Lenhard B."/>
            <person name="Wells C."/>
            <person name="Kodzius R."/>
            <person name="Shimokawa K."/>
            <person name="Bajic V.B."/>
            <person name="Brenner S.E."/>
            <person name="Batalov S."/>
            <person name="Forrest A.R."/>
            <person name="Zavolan M."/>
            <person name="Davis M.J."/>
            <person name="Wilming L.G."/>
            <person name="Aidinis V."/>
            <person name="Allen J.E."/>
            <person name="Ambesi-Impiombato A."/>
            <person name="Apweiler R."/>
            <person name="Aturaliya R.N."/>
            <person name="Bailey T.L."/>
            <person name="Bansal M."/>
            <person name="Baxter L."/>
            <person name="Beisel K.W."/>
            <person name="Bersano T."/>
            <person name="Bono H."/>
            <person name="Chalk A.M."/>
            <person name="Chiu K.P."/>
            <person name="Choudhary V."/>
            <person name="Christoffels A."/>
            <person name="Clutterbuck D.R."/>
            <person name="Crowe M.L."/>
            <person name="Dalla E."/>
            <person name="Dalrymple B.P."/>
            <person name="de Bono B."/>
            <person name="Della Gatta G."/>
            <person name="di Bernardo D."/>
            <person name="Down T."/>
            <person name="Engstrom P."/>
            <person name="Fagiolini M."/>
            <person name="Faulkner G."/>
            <person name="Fletcher C.F."/>
            <person name="Fukushima T."/>
            <person name="Furuno M."/>
            <person name="Futaki S."/>
            <person name="Gariboldi M."/>
            <person name="Georgii-Hemming P."/>
            <person name="Gingeras T.R."/>
            <person name="Gojobori T."/>
            <person name="Green R.E."/>
            <person name="Gustincich S."/>
            <person name="Harbers M."/>
            <person name="Hayashi Y."/>
            <person name="Hensch T.K."/>
            <person name="Hirokawa N."/>
            <person name="Hill D."/>
            <person name="Huminiecki L."/>
            <person name="Iacono M."/>
            <person name="Ikeo K."/>
            <person name="Iwama A."/>
            <person name="Ishikawa T."/>
            <person name="Jakt M."/>
            <person name="Kanapin A."/>
            <person name="Katoh M."/>
            <person name="Kawasawa Y."/>
            <person name="Kelso J."/>
            <person name="Kitamura H."/>
            <person name="Kitano H."/>
            <person name="Kollias G."/>
            <person name="Krishnan S.P."/>
            <person name="Kruger A."/>
            <person name="Kummerfeld S.K."/>
            <person name="Kurochkin I.V."/>
            <person name="Lareau L.F."/>
            <person name="Lazarevic D."/>
            <person name="Lipovich L."/>
            <person name="Liu J."/>
            <person name="Liuni S."/>
            <person name="McWilliam S."/>
            <person name="Madan Babu M."/>
            <person name="Madera M."/>
            <person name="Marchionni L."/>
            <person name="Matsuda H."/>
            <person name="Matsuzawa S."/>
            <person name="Miki H."/>
            <person name="Mignone F."/>
            <person name="Miyake S."/>
            <person name="Morris K."/>
            <person name="Mottagui-Tabar S."/>
            <person name="Mulder N."/>
            <person name="Nakano N."/>
            <person name="Nakauchi H."/>
            <person name="Ng P."/>
            <person name="Nilsson R."/>
            <person name="Nishiguchi S."/>
            <person name="Nishikawa S."/>
            <person name="Nori F."/>
            <person name="Ohara O."/>
            <person name="Okazaki Y."/>
            <person name="Orlando V."/>
            <person name="Pang K.C."/>
            <person name="Pavan W.J."/>
            <person name="Pavesi G."/>
            <person name="Pesole G."/>
            <person name="Petrovsky N."/>
            <person name="Piazza S."/>
            <person name="Reed J."/>
            <person name="Reid J.F."/>
            <person name="Ring B.Z."/>
            <person name="Ringwald M."/>
            <person name="Rost B."/>
            <person name="Ruan Y."/>
            <person name="Salzberg S.L."/>
            <person name="Sandelin A."/>
            <person name="Schneider C."/>
            <person name="Schoenbach C."/>
            <person name="Sekiguchi K."/>
            <person name="Semple C.A."/>
            <person name="Seno S."/>
            <person name="Sessa L."/>
            <person name="Sheng Y."/>
            <person name="Shibata Y."/>
            <person name="Shimada H."/>
            <person name="Shimada K."/>
            <person name="Silva D."/>
            <person name="Sinclair B."/>
            <person name="Sperling S."/>
            <person name="Stupka E."/>
            <person name="Sugiura K."/>
            <person name="Sultana R."/>
            <person name="Takenaka Y."/>
            <person name="Taki K."/>
            <person name="Tammoja K."/>
            <person name="Tan S.L."/>
            <person name="Tang S."/>
            <person name="Taylor M.S."/>
            <person name="Tegner J."/>
            <person name="Teichmann S.A."/>
            <person name="Ueda H.R."/>
            <person name="van Nimwegen E."/>
            <person name="Verardo R."/>
            <person name="Wei C.L."/>
            <person name="Yagi K."/>
            <person name="Yamanishi H."/>
            <person name="Zabarovsky E."/>
            <person name="Zhu S."/>
            <person name="Zimmer A."/>
            <person name="Hide W."/>
            <person name="Bult C."/>
            <person name="Grimmond S.M."/>
            <person name="Teasdale R.D."/>
            <person name="Liu E.T."/>
            <person name="Brusic V."/>
            <person name="Quackenbush J."/>
            <person name="Wahlestedt C."/>
            <person name="Mattick J.S."/>
            <person name="Hume D.A."/>
            <person name="Kai C."/>
            <person name="Sasaki D."/>
            <person name="Tomaru Y."/>
            <person name="Fukuda S."/>
            <person name="Kanamori-Katayama M."/>
            <person name="Suzuki M."/>
            <person name="Aoki J."/>
            <person name="Arakawa T."/>
            <person name="Iida J."/>
            <person name="Imamura K."/>
            <person name="Itoh M."/>
            <person name="Kato T."/>
            <person name="Kawaji H."/>
            <person name="Kawagashira N."/>
            <person name="Kawashima T."/>
            <person name="Kojima M."/>
            <person name="Kondo S."/>
            <person name="Konno H."/>
            <person name="Nakano K."/>
            <person name="Ninomiya N."/>
            <person name="Nishio T."/>
            <person name="Okada M."/>
            <person name="Plessy C."/>
            <person name="Shibata K."/>
            <person name="Shiraki T."/>
            <person name="Suzuki S."/>
            <person name="Tagami M."/>
            <person name="Waki K."/>
            <person name="Watahiki A."/>
            <person name="Okamura-Oho Y."/>
            <person name="Suzuki H."/>
            <person name="Kawai J."/>
            <person name="Hayashizaki Y."/>
        </authorList>
    </citation>
    <scope>NUCLEOTIDE SEQUENCE [LARGE SCALE MRNA]</scope>
    <source>
        <strain>C57BL/6J</strain>
        <tissue>Testis</tissue>
    </source>
</reference>
<reference key="2">
    <citation type="journal article" date="2009" name="PLoS Biol.">
        <title>Lineage-specific biology revealed by a finished genome assembly of the mouse.</title>
        <authorList>
            <person name="Church D.M."/>
            <person name="Goodstadt L."/>
            <person name="Hillier L.W."/>
            <person name="Zody M.C."/>
            <person name="Goldstein S."/>
            <person name="She X."/>
            <person name="Bult C.J."/>
            <person name="Agarwala R."/>
            <person name="Cherry J.L."/>
            <person name="DiCuccio M."/>
            <person name="Hlavina W."/>
            <person name="Kapustin Y."/>
            <person name="Meric P."/>
            <person name="Maglott D."/>
            <person name="Birtle Z."/>
            <person name="Marques A.C."/>
            <person name="Graves T."/>
            <person name="Zhou S."/>
            <person name="Teague B."/>
            <person name="Potamousis K."/>
            <person name="Churas C."/>
            <person name="Place M."/>
            <person name="Herschleb J."/>
            <person name="Runnheim R."/>
            <person name="Forrest D."/>
            <person name="Amos-Landgraf J."/>
            <person name="Schwartz D.C."/>
            <person name="Cheng Z."/>
            <person name="Lindblad-Toh K."/>
            <person name="Eichler E.E."/>
            <person name="Ponting C.P."/>
        </authorList>
    </citation>
    <scope>NUCLEOTIDE SEQUENCE [LARGE SCALE GENOMIC DNA]</scope>
    <source>
        <strain>C57BL/6J</strain>
    </source>
</reference>
<reference key="3">
    <citation type="journal article" date="2004" name="Genome Res.">
        <title>The status, quality, and expansion of the NIH full-length cDNA project: the Mammalian Gene Collection (MGC).</title>
        <authorList>
            <consortium name="The MGC Project Team"/>
        </authorList>
    </citation>
    <scope>NUCLEOTIDE SEQUENCE [LARGE SCALE MRNA]</scope>
    <source>
        <tissue>Testis</tissue>
    </source>
</reference>
<dbReference type="EMBL" id="AK133001">
    <property type="protein sequence ID" value="BAE21463.1"/>
    <property type="molecule type" value="mRNA"/>
</dbReference>
<dbReference type="EMBL" id="BX005471">
    <property type="status" value="NOT_ANNOTATED_CDS"/>
    <property type="molecule type" value="Genomic_DNA"/>
</dbReference>
<dbReference type="EMBL" id="BC147520">
    <property type="protein sequence ID" value="AAI47521.1"/>
    <property type="molecule type" value="mRNA"/>
</dbReference>
<dbReference type="EMBL" id="BC147548">
    <property type="protein sequence ID" value="AAI47549.1"/>
    <property type="molecule type" value="mRNA"/>
</dbReference>
<dbReference type="CCDS" id="CCDS30367.1"/>
<dbReference type="RefSeq" id="NP_001028643.2">
    <property type="nucleotide sequence ID" value="NM_001033471.3"/>
</dbReference>
<dbReference type="STRING" id="10090.ENSMUSP00000098827"/>
<dbReference type="iPTMnet" id="Q3V0P1"/>
<dbReference type="PhosphoSitePlus" id="Q3V0P1"/>
<dbReference type="PaxDb" id="10090-ENSMUSP00000098827"/>
<dbReference type="ProteomicsDB" id="284113"/>
<dbReference type="Antibodypedia" id="14397">
    <property type="antibodies" value="137 antibodies from 27 providers"/>
</dbReference>
<dbReference type="Ensembl" id="ENSMUST00000101269.2">
    <property type="protein sequence ID" value="ENSMUSP00000098827.2"/>
    <property type="gene ID" value="ENSMUSG00000072995.2"/>
</dbReference>
<dbReference type="GeneID" id="382239"/>
<dbReference type="KEGG" id="mmu:382239"/>
<dbReference type="UCSC" id="uc009uea.1">
    <property type="organism name" value="mouse"/>
</dbReference>
<dbReference type="AGR" id="MGI:2685989"/>
<dbReference type="CTD" id="53336"/>
<dbReference type="MGI" id="MGI:2685989">
    <property type="gene designation" value="Cpxcr1"/>
</dbReference>
<dbReference type="VEuPathDB" id="HostDB:ENSMUSG00000072995"/>
<dbReference type="eggNOG" id="ENOG502TDNH">
    <property type="taxonomic scope" value="Eukaryota"/>
</dbReference>
<dbReference type="GeneTree" id="ENSGT00390000003732"/>
<dbReference type="HOGENOM" id="CLU_924280_0_0_1"/>
<dbReference type="InParanoid" id="Q3V0P1"/>
<dbReference type="OMA" id="IPIPRKW"/>
<dbReference type="OrthoDB" id="9833136at2759"/>
<dbReference type="PhylomeDB" id="Q3V0P1"/>
<dbReference type="TreeFam" id="TF341435"/>
<dbReference type="BioGRID-ORCS" id="382239">
    <property type="hits" value="1 hit in 77 CRISPR screens"/>
</dbReference>
<dbReference type="PRO" id="PR:Q3V0P1"/>
<dbReference type="Proteomes" id="UP000000589">
    <property type="component" value="Chromosome X"/>
</dbReference>
<dbReference type="RNAct" id="Q3V0P1">
    <property type="molecule type" value="protein"/>
</dbReference>
<dbReference type="Bgee" id="ENSMUSG00000072995">
    <property type="expression patterns" value="Expressed in spermatid and 4 other cell types or tissues"/>
</dbReference>